<accession>O88298</accession>
<comment type="function">
    <text evidence="1">May be part of an oligomeric complex which is likely to have a transport or channel function in the erythrocyte membrane.</text>
</comment>
<comment type="subcellular location">
    <subcellularLocation>
        <location evidence="2">Cell membrane</location>
        <topology evidence="3">Multi-pass membrane protein</topology>
    </subcellularLocation>
</comment>
<comment type="PTM">
    <text evidence="2">Palmitoylated.</text>
</comment>
<comment type="similarity">
    <text evidence="4">Belongs to the ammonium transporter (TC 2.A.49) family. Rh subfamily.</text>
</comment>
<dbReference type="EMBL" id="AB015191">
    <property type="protein sequence ID" value="BAA32440.1"/>
    <property type="molecule type" value="mRNA"/>
</dbReference>
<dbReference type="EMBL" id="AF531096">
    <property type="protein sequence ID" value="AAQ10013.1"/>
    <property type="molecule type" value="mRNA"/>
</dbReference>
<dbReference type="EMBL" id="BC127471">
    <property type="protein sequence ID" value="AAI27472.1"/>
    <property type="molecule type" value="mRNA"/>
</dbReference>
<dbReference type="RefSeq" id="NP_071950.1">
    <property type="nucleotide sequence ID" value="NM_022505.3"/>
</dbReference>
<dbReference type="SMR" id="O88298"/>
<dbReference type="FunCoup" id="O88298">
    <property type="interactions" value="5"/>
</dbReference>
<dbReference type="STRING" id="10116.ENSRNOP00000023187"/>
<dbReference type="PhosphoSitePlus" id="O88298"/>
<dbReference type="PaxDb" id="10116-ENSRNOP00000023187"/>
<dbReference type="Ensembl" id="ENSRNOT00000023187.6">
    <property type="protein sequence ID" value="ENSRNOP00000023187.4"/>
    <property type="gene ID" value="ENSRNOG00000017130.6"/>
</dbReference>
<dbReference type="GeneID" id="60414"/>
<dbReference type="KEGG" id="rno:60414"/>
<dbReference type="AGR" id="RGD:620451"/>
<dbReference type="CTD" id="6007"/>
<dbReference type="RGD" id="620451">
    <property type="gene designation" value="Rhd"/>
</dbReference>
<dbReference type="eggNOG" id="KOG3796">
    <property type="taxonomic scope" value="Eukaryota"/>
</dbReference>
<dbReference type="GeneTree" id="ENSGT00950000182844"/>
<dbReference type="HOGENOM" id="CLU_021386_1_0_1"/>
<dbReference type="InParanoid" id="O88298"/>
<dbReference type="OMA" id="IHVFATY"/>
<dbReference type="OrthoDB" id="88587at9989"/>
<dbReference type="PhylomeDB" id="O88298"/>
<dbReference type="TreeFam" id="TF314450"/>
<dbReference type="PRO" id="PR:O88298"/>
<dbReference type="Proteomes" id="UP000002494">
    <property type="component" value="Chromosome 5"/>
</dbReference>
<dbReference type="Bgee" id="ENSRNOG00000017130">
    <property type="expression patterns" value="Expressed in spleen and 7 other cell types or tissues"/>
</dbReference>
<dbReference type="GO" id="GO:0016020">
    <property type="term" value="C:membrane"/>
    <property type="evidence" value="ECO:0000266"/>
    <property type="project" value="RGD"/>
</dbReference>
<dbReference type="GO" id="GO:0005886">
    <property type="term" value="C:plasma membrane"/>
    <property type="evidence" value="ECO:0000318"/>
    <property type="project" value="GO_Central"/>
</dbReference>
<dbReference type="GO" id="GO:0008519">
    <property type="term" value="F:ammonium channel activity"/>
    <property type="evidence" value="ECO:0000318"/>
    <property type="project" value="GO_Central"/>
</dbReference>
<dbReference type="GO" id="GO:0097272">
    <property type="term" value="P:ammonium homeostasis"/>
    <property type="evidence" value="ECO:0000318"/>
    <property type="project" value="GO_Central"/>
</dbReference>
<dbReference type="GO" id="GO:0072488">
    <property type="term" value="P:ammonium transmembrane transport"/>
    <property type="evidence" value="ECO:0000266"/>
    <property type="project" value="RGD"/>
</dbReference>
<dbReference type="GO" id="GO:0048821">
    <property type="term" value="P:erythrocyte development"/>
    <property type="evidence" value="ECO:0000266"/>
    <property type="project" value="RGD"/>
</dbReference>
<dbReference type="GO" id="GO:0060586">
    <property type="term" value="P:multicellular organismal-level iron ion homeostasis"/>
    <property type="evidence" value="ECO:0000266"/>
    <property type="project" value="RGD"/>
</dbReference>
<dbReference type="FunFam" id="1.10.3430.10:FF:000009">
    <property type="entry name" value="Blood group Rh(D) polypeptide"/>
    <property type="match status" value="1"/>
</dbReference>
<dbReference type="Gene3D" id="1.10.3430.10">
    <property type="entry name" value="Ammonium transporter AmtB like domains"/>
    <property type="match status" value="1"/>
</dbReference>
<dbReference type="InterPro" id="IPR029020">
    <property type="entry name" value="Ammonium/urea_transptr"/>
</dbReference>
<dbReference type="InterPro" id="IPR024041">
    <property type="entry name" value="NH4_transpt_AmtB-like_dom"/>
</dbReference>
<dbReference type="InterPro" id="IPR002229">
    <property type="entry name" value="RhesusRHD"/>
</dbReference>
<dbReference type="PANTHER" id="PTHR11730">
    <property type="entry name" value="AMMONIUM TRANSPORTER"/>
    <property type="match status" value="1"/>
</dbReference>
<dbReference type="PANTHER" id="PTHR11730:SF43">
    <property type="entry name" value="BLOOD GROUP RH(CE) POLYPEPTIDE-RELATED"/>
    <property type="match status" value="1"/>
</dbReference>
<dbReference type="Pfam" id="PF00909">
    <property type="entry name" value="Ammonium_transp"/>
    <property type="match status" value="1"/>
</dbReference>
<dbReference type="PRINTS" id="PR00342">
    <property type="entry name" value="RHESUSRHD"/>
</dbReference>
<dbReference type="SUPFAM" id="SSF111352">
    <property type="entry name" value="Ammonium transporter"/>
    <property type="match status" value="1"/>
</dbReference>
<sequence length="422" mass="46583">MGSKYPRSLRCCLPLWAFGLQVTFILLFYFLIGQDPIQADHKFMAIYQVIQDLTLVAALGFGFLSSSFRRHGWSSVAFSFFMLALGVQGTILLDYFLNWVLDWNMIKNPFSPFLSIQRATISTLPLLISAGAVLGKVNLVQLAVMVLVEAMTFGAIRVADKKVFRIEDHIIMMYGHVFGAYFGLTVAWWLSKSLPRRRHENAQTEKVQMTTSSSLFAMLGTLFLWIFWPSINSALLEGTKKKNAVFNTYYALAVSTVTATSMSALSHPKGKINMVHIHNAVLAGGVAVGAPSCLISSPWIAMVLGLTAGLISIWGAKCPQVCLSDLLLNPSGIHYTFGLPGLLGALTYYCLHIIAESRPSNLWIVTQTITDVGALSFAMAMGMVTGLLTGCLLSVKVWRAPHAVKYFDDQAFWEFPHLAVEF</sequence>
<reference key="1">
    <citation type="journal article" date="1998" name="Biochem. Biophys. Res. Commun.">
        <title>Conserved evolution of the Rh50 gene compared to its homologous Rh blood group gene.</title>
        <authorList>
            <person name="Kitano T."/>
            <person name="Sumiyama K."/>
            <person name="Shiroishi T."/>
            <person name="Saitou N."/>
        </authorList>
    </citation>
    <scope>NUCLEOTIDE SEQUENCE [MRNA]</scope>
    <source>
        <tissue>Bone marrow</tissue>
    </source>
</reference>
<reference key="2">
    <citation type="journal article" date="2005" name="Proc. Natl. Acad. Sci. U.S.A.">
        <title>Evolutionary conservation and diversification of Rh family genes and proteins.</title>
        <authorList>
            <person name="Huang C.-H."/>
            <person name="Peng J."/>
        </authorList>
    </citation>
    <scope>NUCLEOTIDE SEQUENCE [MRNA]</scope>
    <source>
        <tissue>Blood</tissue>
    </source>
</reference>
<reference key="3">
    <citation type="journal article" date="2004" name="Genome Res.">
        <title>The status, quality, and expansion of the NIH full-length cDNA project: the Mammalian Gene Collection (MGC).</title>
        <authorList>
            <consortium name="The MGC Project Team"/>
        </authorList>
    </citation>
    <scope>NUCLEOTIDE SEQUENCE [LARGE SCALE MRNA]</scope>
    <source>
        <tissue>Liver</tissue>
    </source>
</reference>
<gene>
    <name type="primary">Rhd</name>
    <name type="synonym">Rh30</name>
    <name type="synonym">Rhced</name>
</gene>
<keyword id="KW-1003">Cell membrane</keyword>
<keyword id="KW-0449">Lipoprotein</keyword>
<keyword id="KW-0472">Membrane</keyword>
<keyword id="KW-0564">Palmitate</keyword>
<keyword id="KW-1185">Reference proteome</keyword>
<keyword id="KW-0812">Transmembrane</keyword>
<keyword id="KW-1133">Transmembrane helix</keyword>
<name>RHD_RAT</name>
<protein>
    <recommendedName>
        <fullName>Blood group Rh(D) polypeptide</fullName>
    </recommendedName>
    <alternativeName>
        <fullName>Erythrocyte membrane glycoprotein Rh30</fullName>
    </alternativeName>
    <cdAntigenName>CD240D</cdAntigenName>
</protein>
<proteinExistence type="evidence at transcript level"/>
<evidence type="ECO:0000250" key="1"/>
<evidence type="ECO:0000250" key="2">
    <source>
        <dbReference type="UniProtKB" id="Q02161"/>
    </source>
</evidence>
<evidence type="ECO:0000255" key="3"/>
<evidence type="ECO:0000305" key="4"/>
<feature type="chain" id="PRO_0000383327" description="Blood group Rh(D) polypeptide">
    <location>
        <begin position="1"/>
        <end position="422"/>
    </location>
</feature>
<feature type="transmembrane region" description="Helical" evidence="3">
    <location>
        <begin position="13"/>
        <end position="33"/>
    </location>
</feature>
<feature type="transmembrane region" description="Helical" evidence="3">
    <location>
        <begin position="43"/>
        <end position="63"/>
    </location>
</feature>
<feature type="transmembrane region" description="Helical" evidence="3">
    <location>
        <begin position="76"/>
        <end position="96"/>
    </location>
</feature>
<feature type="transmembrane region" description="Helical" evidence="3">
    <location>
        <begin position="113"/>
        <end position="135"/>
    </location>
</feature>
<feature type="transmembrane region" description="Helical" evidence="3">
    <location>
        <begin position="137"/>
        <end position="159"/>
    </location>
</feature>
<feature type="transmembrane region" description="Helical" evidence="3">
    <location>
        <begin position="170"/>
        <end position="190"/>
    </location>
</feature>
<feature type="transmembrane region" description="Helical" evidence="3">
    <location>
        <begin position="215"/>
        <end position="235"/>
    </location>
</feature>
<feature type="transmembrane region" description="Helical" evidence="3">
    <location>
        <begin position="244"/>
        <end position="266"/>
    </location>
</feature>
<feature type="transmembrane region" description="Helical" evidence="3">
    <location>
        <begin position="272"/>
        <end position="292"/>
    </location>
</feature>
<feature type="transmembrane region" description="Helical" evidence="3">
    <location>
        <begin position="294"/>
        <end position="314"/>
    </location>
</feature>
<feature type="transmembrane region" description="Helical" evidence="3">
    <location>
        <begin position="335"/>
        <end position="355"/>
    </location>
</feature>
<feature type="transmembrane region" description="Helical" evidence="3">
    <location>
        <begin position="372"/>
        <end position="392"/>
    </location>
</feature>
<organism>
    <name type="scientific">Rattus norvegicus</name>
    <name type="common">Rat</name>
    <dbReference type="NCBI Taxonomy" id="10116"/>
    <lineage>
        <taxon>Eukaryota</taxon>
        <taxon>Metazoa</taxon>
        <taxon>Chordata</taxon>
        <taxon>Craniata</taxon>
        <taxon>Vertebrata</taxon>
        <taxon>Euteleostomi</taxon>
        <taxon>Mammalia</taxon>
        <taxon>Eutheria</taxon>
        <taxon>Euarchontoglires</taxon>
        <taxon>Glires</taxon>
        <taxon>Rodentia</taxon>
        <taxon>Myomorpha</taxon>
        <taxon>Muroidea</taxon>
        <taxon>Muridae</taxon>
        <taxon>Murinae</taxon>
        <taxon>Rattus</taxon>
    </lineage>
</organism>